<sequence>MKITKIEKKKRLYLLELDDSEKLYITEDTIVRFMLSKGMEITEQELSEIQDYAQFSYGKNLALYHLSFKQRTAKEVKDFLTQHDIQPEIISQVLDNLKKDNWINDRKYAHSFIQSNLLTGDKGAFVLKQKLSQKGISSTIIEEELSQFDFTELTNKVAEKLLKKYQEKLPSKALQDKILQSLINKGFSYSQAKTAYQHLEIEEDQENQQELLYKELDKQYRKYSKKYDGYDLKQRLTQALARKGYDFSDIASALREYL</sequence>
<comment type="function">
    <text evidence="1">Modulates RecA activity.</text>
</comment>
<comment type="subcellular location">
    <subcellularLocation>
        <location evidence="1">Cytoplasm</location>
    </subcellularLocation>
</comment>
<comment type="similarity">
    <text evidence="1">Belongs to the RecX family.</text>
</comment>
<evidence type="ECO:0000255" key="1">
    <source>
        <dbReference type="HAMAP-Rule" id="MF_01114"/>
    </source>
</evidence>
<reference key="1">
    <citation type="journal article" date="2007" name="J. Bacteriol.">
        <title>Genome of the opportunistic pathogen Streptococcus sanguinis.</title>
        <authorList>
            <person name="Xu P."/>
            <person name="Alves J.M."/>
            <person name="Kitten T."/>
            <person name="Brown A."/>
            <person name="Chen Z."/>
            <person name="Ozaki L.S."/>
            <person name="Manque P."/>
            <person name="Ge X."/>
            <person name="Serrano M.G."/>
            <person name="Puiu D."/>
            <person name="Hendricks S."/>
            <person name="Wang Y."/>
            <person name="Chaplin M.D."/>
            <person name="Akan D."/>
            <person name="Paik S."/>
            <person name="Peterson D.L."/>
            <person name="Macrina F.L."/>
            <person name="Buck G.A."/>
        </authorList>
    </citation>
    <scope>NUCLEOTIDE SEQUENCE [LARGE SCALE GENOMIC DNA]</scope>
    <source>
        <strain>SK36</strain>
    </source>
</reference>
<dbReference type="EMBL" id="CP000387">
    <property type="protein sequence ID" value="ABN45213.1"/>
    <property type="molecule type" value="Genomic_DNA"/>
</dbReference>
<dbReference type="RefSeq" id="WP_011837398.1">
    <property type="nucleotide sequence ID" value="NC_009009.1"/>
</dbReference>
<dbReference type="RefSeq" id="YP_001035763.1">
    <property type="nucleotide sequence ID" value="NC_009009.1"/>
</dbReference>
<dbReference type="SMR" id="A3CPV8"/>
<dbReference type="STRING" id="388919.SSA_1831"/>
<dbReference type="KEGG" id="ssa:SSA_1831"/>
<dbReference type="PATRIC" id="fig|388919.9.peg.1737"/>
<dbReference type="eggNOG" id="COG2137">
    <property type="taxonomic scope" value="Bacteria"/>
</dbReference>
<dbReference type="HOGENOM" id="CLU_066607_4_0_9"/>
<dbReference type="OrthoDB" id="5421057at2"/>
<dbReference type="Proteomes" id="UP000002148">
    <property type="component" value="Chromosome"/>
</dbReference>
<dbReference type="GO" id="GO:0005737">
    <property type="term" value="C:cytoplasm"/>
    <property type="evidence" value="ECO:0007669"/>
    <property type="project" value="UniProtKB-SubCell"/>
</dbReference>
<dbReference type="GO" id="GO:0006282">
    <property type="term" value="P:regulation of DNA repair"/>
    <property type="evidence" value="ECO:0007669"/>
    <property type="project" value="UniProtKB-UniRule"/>
</dbReference>
<dbReference type="Gene3D" id="1.10.10.10">
    <property type="entry name" value="Winged helix-like DNA-binding domain superfamily/Winged helix DNA-binding domain"/>
    <property type="match status" value="4"/>
</dbReference>
<dbReference type="HAMAP" id="MF_01114">
    <property type="entry name" value="RecX"/>
    <property type="match status" value="1"/>
</dbReference>
<dbReference type="InterPro" id="IPR053926">
    <property type="entry name" value="RecX_HTH_1st"/>
</dbReference>
<dbReference type="InterPro" id="IPR053924">
    <property type="entry name" value="RecX_HTH_2nd"/>
</dbReference>
<dbReference type="InterPro" id="IPR053925">
    <property type="entry name" value="RecX_HTH_3rd"/>
</dbReference>
<dbReference type="InterPro" id="IPR003783">
    <property type="entry name" value="Regulatory_RecX"/>
</dbReference>
<dbReference type="InterPro" id="IPR036388">
    <property type="entry name" value="WH-like_DNA-bd_sf"/>
</dbReference>
<dbReference type="NCBIfam" id="NF010733">
    <property type="entry name" value="PRK14135.1"/>
    <property type="match status" value="1"/>
</dbReference>
<dbReference type="PANTHER" id="PTHR33602">
    <property type="entry name" value="REGULATORY PROTEIN RECX FAMILY PROTEIN"/>
    <property type="match status" value="1"/>
</dbReference>
<dbReference type="PANTHER" id="PTHR33602:SF1">
    <property type="entry name" value="REGULATORY PROTEIN RECX FAMILY PROTEIN"/>
    <property type="match status" value="1"/>
</dbReference>
<dbReference type="Pfam" id="PF21982">
    <property type="entry name" value="RecX_HTH1"/>
    <property type="match status" value="1"/>
</dbReference>
<dbReference type="Pfam" id="PF02631">
    <property type="entry name" value="RecX_HTH2"/>
    <property type="match status" value="1"/>
</dbReference>
<dbReference type="Pfam" id="PF21981">
    <property type="entry name" value="RecX_HTH3"/>
    <property type="match status" value="1"/>
</dbReference>
<proteinExistence type="inferred from homology"/>
<protein>
    <recommendedName>
        <fullName evidence="1">Regulatory protein RecX</fullName>
    </recommendedName>
</protein>
<gene>
    <name evidence="1" type="primary">recX</name>
    <name type="ordered locus">SSA_1831</name>
</gene>
<accession>A3CPV8</accession>
<feature type="chain" id="PRO_1000065222" description="Regulatory protein RecX">
    <location>
        <begin position="1"/>
        <end position="258"/>
    </location>
</feature>
<name>RECX_STRSV</name>
<organism>
    <name type="scientific">Streptococcus sanguinis (strain SK36)</name>
    <dbReference type="NCBI Taxonomy" id="388919"/>
    <lineage>
        <taxon>Bacteria</taxon>
        <taxon>Bacillati</taxon>
        <taxon>Bacillota</taxon>
        <taxon>Bacilli</taxon>
        <taxon>Lactobacillales</taxon>
        <taxon>Streptococcaceae</taxon>
        <taxon>Streptococcus</taxon>
    </lineage>
</organism>
<keyword id="KW-0963">Cytoplasm</keyword>
<keyword id="KW-1185">Reference proteome</keyword>